<sequence length="371" mass="40652">MKYFPLFPTLVFAARVVAFPAYASLAGLSQQELDAIIPTLEAREPGLPPGPLENSSAKLVNDEAHPWKPLRPGDIRGPCPGLNTLASHGYLPRNGVATPVQIINAVQEGLNFDNQAAVFATYAAHLVDGNLITDLLSIGRKTRLTGPDPPPPASVGGLNEHGTFEGDASMTRGDAFFGNNHDFNETLFEQLVDYSNRFGGGKYNLTVAGELRFKRIQDSIATNPNFSFVDFRFFTAYGETTFPANLFVDGRRDDGQLDMDAARSFFQFSRMPDDFFRAPSPRSGTGVEVVIQAHPMQPGRNVGKINSYTVDPTSSDFSTPCLMYEKFVNITVKSLYPNPTVQLRKALNTNLDFFFQGVAAGCTQVFPYGRD</sequence>
<gene>
    <name evidence="20" type="primary">APO1</name>
</gene>
<organism>
    <name type="scientific">Cyclocybe aegerita</name>
    <name type="common">Black poplar mushroom</name>
    <name type="synonym">Agrocybe aegerita</name>
    <dbReference type="NCBI Taxonomy" id="1973307"/>
    <lineage>
        <taxon>Eukaryota</taxon>
        <taxon>Fungi</taxon>
        <taxon>Dikarya</taxon>
        <taxon>Basidiomycota</taxon>
        <taxon>Agaricomycotina</taxon>
        <taxon>Agaricomycetes</taxon>
        <taxon>Agaricomycetidae</taxon>
        <taxon>Agaricales</taxon>
        <taxon>Agaricineae</taxon>
        <taxon>Bolbitiaceae</taxon>
        <taxon>Cyclocybe</taxon>
    </lineage>
</organism>
<comment type="function">
    <text evidence="3 4 5 7 8 9 10">Aromatic peroxidase that oxidizes aryl alcohols into the corresponding aldehydes and then into the corresponding benzoic acids. Oxidizes toluene and naphthalene. Catalyzes the regioselective peroxide-dependent hydroxylation of propranolol and diclofenac to 5-hydroxypropranolol and 4'-hydroxydiclofenac. Catalyzes the regioselective peroxide-dependent hydroxylation of naphthalene to 1-naphthol or 2-naphthol via a naphthalene 1,2-oxide intermediate. Catalyzes the regioselective peroxide-dependent oxidation of pyridine to pyridine N-oxide. Halogenates monochlorodimedone and phenol. Oxidizes the sulfur-containing heterocycle dibenzothiophene to yield ring-hydroxylation products and to a lesser extent sulfoxidation products.</text>
</comment>
<comment type="catalytic activity">
    <reaction>
        <text>RH + H2O2 = ROH + H2O.</text>
        <dbReference type="EC" id="1.11.2.1"/>
    </reaction>
</comment>
<comment type="cofactor">
    <cofactor evidence="3">
        <name>heme b</name>
        <dbReference type="ChEBI" id="CHEBI:60344"/>
    </cofactor>
    <text evidence="3">Binds 1 heme b (iron(II)-protoporphyrin IX) group.</text>
</comment>
<comment type="biophysicochemical properties">
    <kinetics>
        <KM evidence="3 5 8">37 uM for ABTS (at pH 4.5)</KM>
        <KM evidence="3 5 8">1001 uM for benzyl alcohol (at pH 7)</KM>
        <KM evidence="3 5 8">298 uM for dimethoxyphenol (at pH 7)</KM>
        <KM evidence="3 5 8">1313 uM for hydrogen peroxide (at pH 7)</KM>
        <KM evidence="3 5 8">320 uM for naphthalene (at pH 7)</KM>
        <KM evidence="3 5 8">69 uM for pyridine (at pH 7)</KM>
        <KM evidence="3 5 8">2367 uM for veratryl alcohol (at pH 7)</KM>
    </kinetics>
    <phDependence>
        <text evidence="3 5 8">Optimum pH is 4.7 with ABTS as substrate. Optimum pH is 7.2 with benzyl alcohol as substrate, and there is another optimum at pH 6.2. Optimum pH is 7.2 with dimethoxyphenol as substrate. Optimum pH is 6.0 with naphthalene as substrate. Optimum pH is 7.0 with pyridine as substrate. Optimum pH is 7.0 with veratryl alcohol as substrate, and there is another optimum at pH 5.5.</text>
    </phDependence>
</comment>
<comment type="developmental stage">
    <text evidence="11">Expressed at a low basal level while growing in a soybean-based medium until day 18 when expression rises significantly to peak at day 23. Expression decreases steadily after day 28 to return basal level by day 42.</text>
</comment>
<comment type="PTM">
    <text evidence="11">N-glycosylated.</text>
</comment>
<comment type="similarity">
    <text evidence="2">Belongs to the chloroperoxidase family.</text>
</comment>
<keyword id="KW-0002">3D-structure</keyword>
<keyword id="KW-0903">Direct protein sequencing</keyword>
<keyword id="KW-1015">Disulfide bond</keyword>
<keyword id="KW-0325">Glycoprotein</keyword>
<keyword id="KW-0349">Heme</keyword>
<keyword id="KW-0376">Hydrogen peroxide</keyword>
<keyword id="KW-0408">Iron</keyword>
<keyword id="KW-0479">Metal-binding</keyword>
<keyword id="KW-0560">Oxidoreductase</keyword>
<keyword id="KW-0575">Peroxidase</keyword>
<keyword id="KW-0732">Signal</keyword>
<accession>B9W4V6</accession>
<protein>
    <recommendedName>
        <fullName evidence="12 13 14 15 16 17 18">Aromatic peroxygenase</fullName>
        <shortName evidence="12">AaP</shortName>
        <ecNumber>1.11.2.1</ecNumber>
    </recommendedName>
</protein>
<reference evidence="19 20" key="1">
    <citation type="journal article" date="2009" name="Appl. Microbiol. Biotechnol.">
        <title>Molecular characterization of aromatic peroxygenase from Agrocybe aegerita.</title>
        <authorList>
            <person name="Pecyna M.J."/>
            <person name="Ullrich R."/>
            <person name="Bittner B."/>
            <person name="Clemens A."/>
            <person name="Scheibner K."/>
            <person name="Schubert R."/>
            <person name="Hofrichter M."/>
        </authorList>
    </citation>
    <scope>NUCLEOTIDE SEQUENCE [GENOMIC DNA / MRNA]</scope>
    <scope>IDENTIFICATION BY MASS SPECTROMETRY</scope>
    <scope>DEVELOPMENTAL STAGE</scope>
    <scope>GLYCOSYLATION</scope>
    <source>
        <strain evidence="20">TM-A1</strain>
    </source>
</reference>
<reference evidence="19" key="2">
    <citation type="journal article" date="2007" name="Appl. Environ. Microbiol.">
        <title>The coprophilous mushroom Coprinus radians secretes a haloperoxidase that catalyzes aromatic peroxygenation.</title>
        <authorList>
            <person name="Anh D.H."/>
            <person name="Ullrich R."/>
            <person name="Benndorf D."/>
            <person name="Svatos A."/>
            <person name="Muck A."/>
            <person name="Hofrichter M."/>
        </authorList>
    </citation>
    <scope>PROTEIN SEQUENCE OF 44-57; 77-93 AND 218-232</scope>
</reference>
<reference evidence="19" key="3">
    <citation type="journal article" date="2004" name="Appl. Environ. Microbiol.">
        <title>Novel haloperoxidase from the agaric basidiomycete Agrocybe aegerita oxidizes aryl alcohols and aldehydes.</title>
        <authorList>
            <person name="Ullrich R."/>
            <person name="Nuske J."/>
            <person name="Scheibner K."/>
            <person name="Spantzel J."/>
            <person name="Hofrichter M."/>
        </authorList>
    </citation>
    <scope>PROTEIN SEQUENCE OF 44-57</scope>
    <scope>FUNCTION</scope>
    <scope>COFACTOR</scope>
    <scope>BIOPHYSICOCHEMICAL PROPERTIES</scope>
    <source>
        <strain evidence="3">TM-A1</strain>
    </source>
</reference>
<reference evidence="19" key="4">
    <citation type="journal article" date="2005" name="FEBS Lett.">
        <title>The haloperoxidase of the agaric fungus Agrocybe aegerita hydroxylates toluene and naphthalene.</title>
        <authorList>
            <person name="Ullrich R."/>
            <person name="Hofrichter M."/>
        </authorList>
    </citation>
    <scope>FUNCTION</scope>
</reference>
<reference evidence="19" key="5">
    <citation type="journal article" date="2007" name="Appl. Microbiol. Biotechnol.">
        <title>Spectrophotometric assay for detection of aromatic hydroxylation catalyzed by fungal haloperoxidase-peroxygenase.</title>
        <authorList>
            <person name="Kluge M.G."/>
            <person name="Ullrich R."/>
            <person name="Scheibner K."/>
            <person name="Hofrichter M."/>
        </authorList>
    </citation>
    <scope>FUNCTION</scope>
    <scope>BIOPHYSICOCHEMICAL PROPERTIES</scope>
</reference>
<reference evidence="19" key="6">
    <citation type="journal article" date="2008" name="FEBS Lett.">
        <title>Pyridine as novel substrate for regioselective oxygenation with aromatic peroxygenase from Agrocybe aegerita.</title>
        <authorList>
            <person name="Ullrich R."/>
            <person name="Dolge C."/>
            <person name="Kluge M."/>
            <person name="Hofrichter M."/>
        </authorList>
    </citation>
    <scope>FUNCTION</scope>
    <scope>BIOPHYSICOCHEMICAL PROPERTIES</scope>
</reference>
<reference evidence="19" key="7">
    <citation type="journal article" date="2009" name="Appl. Microbiol. Biotechnol.">
        <title>Conversion of dibenzothiophene by the mushrooms Agrocybe aegerita and Coprinellus radians and their extracellular peroxygenases.</title>
        <authorList>
            <person name="Aranda E."/>
            <person name="Kinne M."/>
            <person name="Kluge M."/>
            <person name="Ullrich R."/>
            <person name="Hofrichter M."/>
        </authorList>
    </citation>
    <scope>FUNCTION</scope>
</reference>
<reference evidence="19" key="8">
    <citation type="journal article" date="2009" name="Appl. Microbiol. Biotechnol.">
        <title>Hydroxylation of naphthalene by aromatic peroxygenase from Agrocybe aegerita proceeds via oxygen transfer from H2O2 and intermediary epoxidation.</title>
        <authorList>
            <person name="Kluge M."/>
            <person name="Ullrich R."/>
            <person name="Dolge C."/>
            <person name="Scheibner K."/>
            <person name="Hofrichter M."/>
        </authorList>
    </citation>
    <scope>FUNCTION</scope>
</reference>
<reference evidence="19" key="9">
    <citation type="journal article" date="2009" name="Bioorg. Med. Chem. Lett.">
        <title>Regioselective preparation of 5-hydroxypropranolol and 4'-hydroxydiclofenac with a fungal peroxygenase.</title>
        <authorList>
            <person name="Kinne M."/>
            <person name="Poraj-Kobielska M."/>
            <person name="Aranda E."/>
            <person name="Ullrich R."/>
            <person name="Hammel K.E."/>
            <person name="Scheibner K."/>
            <person name="Hofrichter M."/>
        </authorList>
    </citation>
    <scope>FUNCTION</scope>
</reference>
<feature type="signal peptide" evidence="2">
    <location>
        <begin position="1"/>
        <end position="18"/>
    </location>
</feature>
<feature type="propeptide" id="PRO_0000391456" evidence="2 3 6">
    <location>
        <begin position="19"/>
        <end position="43"/>
    </location>
</feature>
<feature type="chain" id="PRO_5000442826" description="Aromatic peroxygenase" evidence="3 6">
    <location>
        <begin position="44"/>
        <end position="371"/>
    </location>
</feature>
<feature type="binding site" description="axial binding residue" evidence="1">
    <location>
        <position position="79"/>
    </location>
    <ligand>
        <name>heme</name>
        <dbReference type="ChEBI" id="CHEBI:30413"/>
    </ligand>
    <ligandPart>
        <name>Fe</name>
        <dbReference type="ChEBI" id="CHEBI:18248"/>
    </ligandPart>
</feature>
<feature type="glycosylation site" description="N-linked (GlcNAc...) asparagine" evidence="2">
    <location>
        <position position="54"/>
    </location>
</feature>
<feature type="glycosylation site" description="N-linked (GlcNAc...) asparagine" evidence="2">
    <location>
        <position position="184"/>
    </location>
</feature>
<feature type="glycosylation site" description="N-linked (GlcNAc...) asparagine" evidence="2">
    <location>
        <position position="204"/>
    </location>
</feature>
<feature type="glycosylation site" description="N-linked (GlcNAc...) asparagine" evidence="2">
    <location>
        <position position="225"/>
    </location>
</feature>
<feature type="glycosylation site" description="N-linked (GlcNAc...) asparagine" evidence="2">
    <location>
        <position position="329"/>
    </location>
</feature>
<feature type="disulfide bond" evidence="11">
    <location>
        <begin position="321"/>
        <end position="362"/>
    </location>
</feature>
<feature type="sequence conflict" description="In Ref. 2; AA sequence and 3; AA sequence." evidence="19" ref="2 3">
    <original>L</original>
    <variation>K</variation>
    <location>
        <position position="47"/>
    </location>
</feature>
<feature type="sequence conflict" description="In Ref. 2; AA sequence and 3; AA sequence." evidence="19" ref="2 3">
    <original>LEN</original>
    <variation>PEE</variation>
    <location>
        <begin position="52"/>
        <end position="54"/>
    </location>
</feature>
<feature type="sequence conflict" description="In Ref. 2; AA sequence." evidence="19" ref="2">
    <original>I</original>
    <variation>N</variation>
    <location>
        <position position="220"/>
    </location>
</feature>
<feature type="sequence conflict" description="In Ref. 2; AA sequence." evidence="19" ref="2">
    <original>N</original>
    <variation>D</variation>
    <location>
        <position position="225"/>
    </location>
</feature>
<feature type="strand" evidence="22">
    <location>
        <begin position="59"/>
        <end position="62"/>
    </location>
</feature>
<feature type="helix" evidence="21">
    <location>
        <begin position="80"/>
        <end position="87"/>
    </location>
</feature>
<feature type="strand" evidence="21">
    <location>
        <begin position="95"/>
        <end position="97"/>
    </location>
</feature>
<feature type="helix" evidence="21">
    <location>
        <begin position="99"/>
        <end position="110"/>
    </location>
</feature>
<feature type="helix" evidence="21">
    <location>
        <begin position="114"/>
        <end position="128"/>
    </location>
</feature>
<feature type="turn" evidence="21">
    <location>
        <begin position="131"/>
        <end position="134"/>
    </location>
</feature>
<feature type="strand" evidence="21">
    <location>
        <begin position="135"/>
        <end position="140"/>
    </location>
</feature>
<feature type="helix" evidence="21">
    <location>
        <begin position="143"/>
        <end position="145"/>
    </location>
</feature>
<feature type="turn" evidence="21">
    <location>
        <begin position="161"/>
        <end position="163"/>
    </location>
</feature>
<feature type="strand" evidence="21">
    <location>
        <begin position="170"/>
        <end position="172"/>
    </location>
</feature>
<feature type="helix" evidence="21">
    <location>
        <begin position="175"/>
        <end position="177"/>
    </location>
</feature>
<feature type="strand" evidence="21">
    <location>
        <begin position="180"/>
        <end position="182"/>
    </location>
</feature>
<feature type="helix" evidence="21">
    <location>
        <begin position="185"/>
        <end position="198"/>
    </location>
</feature>
<feature type="helix" evidence="21">
    <location>
        <begin position="205"/>
        <end position="222"/>
    </location>
</feature>
<feature type="helix" evidence="21">
    <location>
        <begin position="230"/>
        <end position="246"/>
    </location>
</feature>
<feature type="turn" evidence="21">
    <location>
        <begin position="250"/>
        <end position="252"/>
    </location>
</feature>
<feature type="helix" evidence="21">
    <location>
        <begin position="259"/>
        <end position="268"/>
    </location>
</feature>
<feature type="strand" evidence="21">
    <location>
        <begin position="282"/>
        <end position="284"/>
    </location>
</feature>
<feature type="helix" evidence="21">
    <location>
        <begin position="287"/>
        <end position="293"/>
    </location>
</feature>
<feature type="strand" evidence="23">
    <location>
        <begin position="303"/>
        <end position="306"/>
    </location>
</feature>
<feature type="helix" evidence="21">
    <location>
        <begin position="320"/>
        <end position="329"/>
    </location>
</feature>
<feature type="helix" evidence="21">
    <location>
        <begin position="331"/>
        <end position="335"/>
    </location>
</feature>
<feature type="strand" evidence="21">
    <location>
        <begin position="336"/>
        <end position="338"/>
    </location>
</feature>
<feature type="helix" evidence="21">
    <location>
        <begin position="341"/>
        <end position="356"/>
    </location>
</feature>
<evidence type="ECO:0000250" key="1">
    <source>
        <dbReference type="UniProtKB" id="P04963"/>
    </source>
</evidence>
<evidence type="ECO:0000255" key="2"/>
<evidence type="ECO:0000269" key="3">
    <source>
    </source>
</evidence>
<evidence type="ECO:0000269" key="4">
    <source>
    </source>
</evidence>
<evidence type="ECO:0000269" key="5">
    <source>
    </source>
</evidence>
<evidence type="ECO:0000269" key="6">
    <source>
    </source>
</evidence>
<evidence type="ECO:0000269" key="7">
    <source>
    </source>
</evidence>
<evidence type="ECO:0000269" key="8">
    <source>
    </source>
</evidence>
<evidence type="ECO:0000269" key="9">
    <source>
    </source>
</evidence>
<evidence type="ECO:0000269" key="10">
    <source>
    </source>
</evidence>
<evidence type="ECO:0000269" key="11">
    <source>
    </source>
</evidence>
<evidence type="ECO:0000303" key="12">
    <source>
    </source>
</evidence>
<evidence type="ECO:0000303" key="13">
    <source>
    </source>
</evidence>
<evidence type="ECO:0000303" key="14">
    <source>
    </source>
</evidence>
<evidence type="ECO:0000303" key="15">
    <source>
    </source>
</evidence>
<evidence type="ECO:0000303" key="16">
    <source>
    </source>
</evidence>
<evidence type="ECO:0000303" key="17">
    <source>
    </source>
</evidence>
<evidence type="ECO:0000303" key="18">
    <source>
    </source>
</evidence>
<evidence type="ECO:0000305" key="19"/>
<evidence type="ECO:0000312" key="20">
    <source>
        <dbReference type="EMBL" id="CAS12253.1"/>
    </source>
</evidence>
<evidence type="ECO:0007829" key="21">
    <source>
        <dbReference type="PDB" id="6EKZ"/>
    </source>
</evidence>
<evidence type="ECO:0007829" key="22">
    <source>
        <dbReference type="PDB" id="7PN5"/>
    </source>
</evidence>
<evidence type="ECO:0007829" key="23">
    <source>
        <dbReference type="PDB" id="7PN6"/>
    </source>
</evidence>
<dbReference type="EC" id="1.11.2.1"/>
<dbReference type="EMBL" id="FM872457">
    <property type="protein sequence ID" value="CAS12253.1"/>
    <property type="molecule type" value="Genomic_DNA"/>
</dbReference>
<dbReference type="EMBL" id="FM872458">
    <property type="protein sequence ID" value="CAS12254.1"/>
    <property type="molecule type" value="mRNA"/>
</dbReference>
<dbReference type="PDB" id="2YOR">
    <property type="method" value="X-ray"/>
    <property type="resolution" value="2.19 A"/>
    <property type="chains" value="A/B=47-371"/>
</dbReference>
<dbReference type="PDB" id="2YP1">
    <property type="method" value="X-ray"/>
    <property type="resolution" value="2.31 A"/>
    <property type="chains" value="A/B/C/D=47-371"/>
</dbReference>
<dbReference type="PDB" id="5OXT">
    <property type="method" value="X-ray"/>
    <property type="resolution" value="1.42 A"/>
    <property type="chains" value="A/B/C=44-371"/>
</dbReference>
<dbReference type="PDB" id="5OXU">
    <property type="method" value="X-ray"/>
    <property type="resolution" value="1.47 A"/>
    <property type="chains" value="A=44-371"/>
</dbReference>
<dbReference type="PDB" id="5OY1">
    <property type="method" value="X-ray"/>
    <property type="resolution" value="1.43 A"/>
    <property type="chains" value="A=44-371"/>
</dbReference>
<dbReference type="PDB" id="5OY2">
    <property type="method" value="X-ray"/>
    <property type="resolution" value="1.36 A"/>
    <property type="chains" value="A=44-371"/>
</dbReference>
<dbReference type="PDB" id="6EKW">
    <property type="method" value="X-ray"/>
    <property type="resolution" value="1.43 A"/>
    <property type="chains" value="A=44-371"/>
</dbReference>
<dbReference type="PDB" id="6EKX">
    <property type="method" value="X-ray"/>
    <property type="resolution" value="1.13 A"/>
    <property type="chains" value="A=44-371"/>
</dbReference>
<dbReference type="PDB" id="6EKY">
    <property type="method" value="X-ray"/>
    <property type="resolution" value="1.23 A"/>
    <property type="chains" value="A=44-371"/>
</dbReference>
<dbReference type="PDB" id="6EKZ">
    <property type="method" value="X-ray"/>
    <property type="resolution" value="1.08 A"/>
    <property type="chains" value="A=44-371"/>
</dbReference>
<dbReference type="PDB" id="6EL0">
    <property type="method" value="X-ray"/>
    <property type="resolution" value="1.65 A"/>
    <property type="chains" value="A=44-371"/>
</dbReference>
<dbReference type="PDB" id="6EL4">
    <property type="method" value="X-ray"/>
    <property type="resolution" value="1.53 A"/>
    <property type="chains" value="A=44-371"/>
</dbReference>
<dbReference type="PDB" id="7PN4">
    <property type="method" value="X-ray"/>
    <property type="resolution" value="2.05 A"/>
    <property type="chains" value="A=44-371"/>
</dbReference>
<dbReference type="PDB" id="7PN5">
    <property type="method" value="X-ray"/>
    <property type="resolution" value="1.82 A"/>
    <property type="chains" value="A=44-371"/>
</dbReference>
<dbReference type="PDB" id="7PN6">
    <property type="method" value="X-ray"/>
    <property type="resolution" value="1.50 A"/>
    <property type="chains" value="A=44-371"/>
</dbReference>
<dbReference type="PDB" id="7PN7">
    <property type="method" value="X-ray"/>
    <property type="resolution" value="1.65 A"/>
    <property type="chains" value="A=44-371"/>
</dbReference>
<dbReference type="PDB" id="7PN8">
    <property type="method" value="X-ray"/>
    <property type="resolution" value="1.50 A"/>
    <property type="chains" value="A=44-371"/>
</dbReference>
<dbReference type="PDB" id="7PN9">
    <property type="method" value="X-ray"/>
    <property type="resolution" value="1.85 A"/>
    <property type="chains" value="A=44-371"/>
</dbReference>
<dbReference type="PDB" id="7PNA">
    <property type="method" value="X-ray"/>
    <property type="resolution" value="1.90 A"/>
    <property type="chains" value="A=44-371"/>
</dbReference>
<dbReference type="PDB" id="8AV5">
    <property type="method" value="X-ray"/>
    <property type="resolution" value="1.62 A"/>
    <property type="chains" value="A=47-370"/>
</dbReference>
<dbReference type="PDBsum" id="2YOR"/>
<dbReference type="PDBsum" id="2YP1"/>
<dbReference type="PDBsum" id="5OXT"/>
<dbReference type="PDBsum" id="5OXU"/>
<dbReference type="PDBsum" id="5OY1"/>
<dbReference type="PDBsum" id="5OY2"/>
<dbReference type="PDBsum" id="6EKW"/>
<dbReference type="PDBsum" id="6EKX"/>
<dbReference type="PDBsum" id="6EKY"/>
<dbReference type="PDBsum" id="6EKZ"/>
<dbReference type="PDBsum" id="6EL0"/>
<dbReference type="PDBsum" id="6EL4"/>
<dbReference type="PDBsum" id="7PN4"/>
<dbReference type="PDBsum" id="7PN5"/>
<dbReference type="PDBsum" id="7PN6"/>
<dbReference type="PDBsum" id="7PN7"/>
<dbReference type="PDBsum" id="7PN8"/>
<dbReference type="PDBsum" id="7PN9"/>
<dbReference type="PDBsum" id="7PNA"/>
<dbReference type="PDBsum" id="8AV5"/>
<dbReference type="SMR" id="B9W4V6"/>
<dbReference type="ChEMBL" id="CHEMBL5472"/>
<dbReference type="GlyCosmos" id="B9W4V6">
    <property type="glycosylation" value="5 sites, No reported glycans"/>
</dbReference>
<dbReference type="KEGG" id="ag:CAS12253"/>
<dbReference type="BioCyc" id="MetaCyc:MONOMER-15996"/>
<dbReference type="BRENDA" id="1.11.2.1">
    <property type="organism ID" value="8897"/>
</dbReference>
<dbReference type="SABIO-RK" id="B9W4V6"/>
<dbReference type="EvolutionaryTrace" id="B9W4V6"/>
<dbReference type="GO" id="GO:0020037">
    <property type="term" value="F:heme binding"/>
    <property type="evidence" value="ECO:0000314"/>
    <property type="project" value="UniProtKB"/>
</dbReference>
<dbReference type="GO" id="GO:0046872">
    <property type="term" value="F:metal ion binding"/>
    <property type="evidence" value="ECO:0007669"/>
    <property type="project" value="UniProtKB-KW"/>
</dbReference>
<dbReference type="GO" id="GO:0004601">
    <property type="term" value="F:peroxidase activity"/>
    <property type="evidence" value="ECO:0000314"/>
    <property type="project" value="UniProtKB"/>
</dbReference>
<dbReference type="GO" id="GO:0042744">
    <property type="term" value="P:hydrogen peroxide catabolic process"/>
    <property type="evidence" value="ECO:0007669"/>
    <property type="project" value="UniProtKB-KW"/>
</dbReference>
<dbReference type="FunFam" id="1.10.489.10:FF:000001">
    <property type="entry name" value="Aromatic peroxygenase"/>
    <property type="match status" value="1"/>
</dbReference>
<dbReference type="Gene3D" id="1.10.489.10">
    <property type="entry name" value="Chloroperoxidase-like"/>
    <property type="match status" value="1"/>
</dbReference>
<dbReference type="InterPro" id="IPR000028">
    <property type="entry name" value="Chloroperoxidase"/>
</dbReference>
<dbReference type="InterPro" id="IPR036851">
    <property type="entry name" value="Chloroperoxidase-like_sf"/>
</dbReference>
<dbReference type="PANTHER" id="PTHR33577:SF16">
    <property type="entry name" value="HEME HALOPEROXIDASE FAMILY PROFILE DOMAIN-CONTAINING PROTEIN"/>
    <property type="match status" value="1"/>
</dbReference>
<dbReference type="PANTHER" id="PTHR33577">
    <property type="entry name" value="STERIGMATOCYSTIN BIOSYNTHESIS PEROXIDASE STCC-RELATED"/>
    <property type="match status" value="1"/>
</dbReference>
<dbReference type="Pfam" id="PF01328">
    <property type="entry name" value="Peroxidase_2"/>
    <property type="match status" value="1"/>
</dbReference>
<dbReference type="SUPFAM" id="SSF47571">
    <property type="entry name" value="Cloroperoxidase"/>
    <property type="match status" value="1"/>
</dbReference>
<dbReference type="PROSITE" id="PS51405">
    <property type="entry name" value="HEME_HALOPEROXIDASE"/>
    <property type="match status" value="1"/>
</dbReference>
<proteinExistence type="evidence at protein level"/>
<name>APO1_CYCAE</name>